<evidence type="ECO:0000255" key="1">
    <source>
        <dbReference type="HAMAP-Rule" id="MF_01619"/>
    </source>
</evidence>
<comment type="catalytic activity">
    <reaction evidence="1">
        <text>(S)-malate + NAD(+) = pyruvate + CO2 + NADH</text>
        <dbReference type="Rhea" id="RHEA:12653"/>
        <dbReference type="ChEBI" id="CHEBI:15361"/>
        <dbReference type="ChEBI" id="CHEBI:15589"/>
        <dbReference type="ChEBI" id="CHEBI:16526"/>
        <dbReference type="ChEBI" id="CHEBI:57540"/>
        <dbReference type="ChEBI" id="CHEBI:57945"/>
        <dbReference type="EC" id="1.1.1.38"/>
    </reaction>
</comment>
<comment type="catalytic activity">
    <reaction evidence="1">
        <text>oxaloacetate + H(+) = pyruvate + CO2</text>
        <dbReference type="Rhea" id="RHEA:15641"/>
        <dbReference type="ChEBI" id="CHEBI:15361"/>
        <dbReference type="ChEBI" id="CHEBI:15378"/>
        <dbReference type="ChEBI" id="CHEBI:16452"/>
        <dbReference type="ChEBI" id="CHEBI:16526"/>
        <dbReference type="EC" id="1.1.1.38"/>
    </reaction>
</comment>
<comment type="cofactor">
    <cofactor evidence="1">
        <name>Mg(2+)</name>
        <dbReference type="ChEBI" id="CHEBI:18420"/>
    </cofactor>
    <cofactor evidence="1">
        <name>Mn(2+)</name>
        <dbReference type="ChEBI" id="CHEBI:29035"/>
    </cofactor>
    <text evidence="1">Divalent metal cations. Prefers magnesium or manganese.</text>
</comment>
<comment type="subunit">
    <text evidence="1">Homotetramer.</text>
</comment>
<comment type="similarity">
    <text evidence="1">Belongs to the malic enzymes family.</text>
</comment>
<dbReference type="EC" id="1.1.1.38" evidence="1"/>
<dbReference type="EMBL" id="CU928164">
    <property type="protein sequence ID" value="CAR17874.1"/>
    <property type="molecule type" value="Genomic_DNA"/>
</dbReference>
<dbReference type="RefSeq" id="WP_000433462.1">
    <property type="nucleotide sequence ID" value="NC_011750.1"/>
</dbReference>
<dbReference type="RefSeq" id="YP_002407738.1">
    <property type="nucleotide sequence ID" value="NC_011750.1"/>
</dbReference>
<dbReference type="SMR" id="B7NHU3"/>
<dbReference type="STRING" id="585057.ECIAI39_1743"/>
<dbReference type="KEGG" id="ect:ECIAI39_1743"/>
<dbReference type="PATRIC" id="fig|585057.6.peg.1816"/>
<dbReference type="HOGENOM" id="CLU_011405_5_2_6"/>
<dbReference type="Proteomes" id="UP000000749">
    <property type="component" value="Chromosome"/>
</dbReference>
<dbReference type="GO" id="GO:0005829">
    <property type="term" value="C:cytosol"/>
    <property type="evidence" value="ECO:0007669"/>
    <property type="project" value="TreeGrafter"/>
</dbReference>
<dbReference type="GO" id="GO:0004471">
    <property type="term" value="F:malate dehydrogenase (decarboxylating) (NAD+) activity"/>
    <property type="evidence" value="ECO:0007669"/>
    <property type="project" value="UniProtKB-UniRule"/>
</dbReference>
<dbReference type="GO" id="GO:0046872">
    <property type="term" value="F:metal ion binding"/>
    <property type="evidence" value="ECO:0007669"/>
    <property type="project" value="UniProtKB-KW"/>
</dbReference>
<dbReference type="GO" id="GO:0051287">
    <property type="term" value="F:NAD binding"/>
    <property type="evidence" value="ECO:0007669"/>
    <property type="project" value="InterPro"/>
</dbReference>
<dbReference type="GO" id="GO:0008948">
    <property type="term" value="F:oxaloacetate decarboxylase activity"/>
    <property type="evidence" value="ECO:0007669"/>
    <property type="project" value="UniProtKB-UniRule"/>
</dbReference>
<dbReference type="GO" id="GO:0006108">
    <property type="term" value="P:malate metabolic process"/>
    <property type="evidence" value="ECO:0007669"/>
    <property type="project" value="TreeGrafter"/>
</dbReference>
<dbReference type="CDD" id="cd05312">
    <property type="entry name" value="NAD_bind_1_malic_enz"/>
    <property type="match status" value="1"/>
</dbReference>
<dbReference type="FunFam" id="3.40.50.10380:FF:000001">
    <property type="entry name" value="NAD-dependent malic enzyme"/>
    <property type="match status" value="1"/>
</dbReference>
<dbReference type="FunFam" id="3.40.50.720:FF:000055">
    <property type="entry name" value="NAD-dependent malic enzyme"/>
    <property type="match status" value="1"/>
</dbReference>
<dbReference type="Gene3D" id="3.40.50.10380">
    <property type="entry name" value="Malic enzyme, N-terminal domain"/>
    <property type="match status" value="1"/>
</dbReference>
<dbReference type="Gene3D" id="3.40.50.720">
    <property type="entry name" value="NAD(P)-binding Rossmann-like Domain"/>
    <property type="match status" value="1"/>
</dbReference>
<dbReference type="HAMAP" id="MF_01619">
    <property type="entry name" value="NAD_malic_enz"/>
    <property type="match status" value="1"/>
</dbReference>
<dbReference type="InterPro" id="IPR046346">
    <property type="entry name" value="Aminoacid_DH-like_N_sf"/>
</dbReference>
<dbReference type="InterPro" id="IPR015884">
    <property type="entry name" value="Malic_enzyme_CS"/>
</dbReference>
<dbReference type="InterPro" id="IPR012301">
    <property type="entry name" value="Malic_N_dom"/>
</dbReference>
<dbReference type="InterPro" id="IPR037062">
    <property type="entry name" value="Malic_N_dom_sf"/>
</dbReference>
<dbReference type="InterPro" id="IPR012302">
    <property type="entry name" value="Malic_NAD-bd"/>
</dbReference>
<dbReference type="InterPro" id="IPR001891">
    <property type="entry name" value="Malic_OxRdtase"/>
</dbReference>
<dbReference type="InterPro" id="IPR036291">
    <property type="entry name" value="NAD(P)-bd_dom_sf"/>
</dbReference>
<dbReference type="InterPro" id="IPR023667">
    <property type="entry name" value="NAD_malic_enz_proteobac"/>
</dbReference>
<dbReference type="NCBIfam" id="NF010052">
    <property type="entry name" value="PRK13529.1"/>
    <property type="match status" value="1"/>
</dbReference>
<dbReference type="PANTHER" id="PTHR23406">
    <property type="entry name" value="MALIC ENZYME-RELATED"/>
    <property type="match status" value="1"/>
</dbReference>
<dbReference type="PANTHER" id="PTHR23406:SF34">
    <property type="entry name" value="NAD-DEPENDENT MALIC ENZYME, MITOCHONDRIAL"/>
    <property type="match status" value="1"/>
</dbReference>
<dbReference type="Pfam" id="PF00390">
    <property type="entry name" value="malic"/>
    <property type="match status" value="1"/>
</dbReference>
<dbReference type="Pfam" id="PF03949">
    <property type="entry name" value="Malic_M"/>
    <property type="match status" value="1"/>
</dbReference>
<dbReference type="PIRSF" id="PIRSF000106">
    <property type="entry name" value="ME"/>
    <property type="match status" value="1"/>
</dbReference>
<dbReference type="PRINTS" id="PR00072">
    <property type="entry name" value="MALOXRDTASE"/>
</dbReference>
<dbReference type="SMART" id="SM01274">
    <property type="entry name" value="malic"/>
    <property type="match status" value="1"/>
</dbReference>
<dbReference type="SMART" id="SM00919">
    <property type="entry name" value="Malic_M"/>
    <property type="match status" value="1"/>
</dbReference>
<dbReference type="SUPFAM" id="SSF53223">
    <property type="entry name" value="Aminoacid dehydrogenase-like, N-terminal domain"/>
    <property type="match status" value="1"/>
</dbReference>
<dbReference type="SUPFAM" id="SSF51735">
    <property type="entry name" value="NAD(P)-binding Rossmann-fold domains"/>
    <property type="match status" value="1"/>
</dbReference>
<dbReference type="PROSITE" id="PS00331">
    <property type="entry name" value="MALIC_ENZYMES"/>
    <property type="match status" value="1"/>
</dbReference>
<protein>
    <recommendedName>
        <fullName evidence="1">NAD-dependent malic enzyme</fullName>
        <shortName evidence="1">NAD-ME</shortName>
        <ecNumber evidence="1">1.1.1.38</ecNumber>
    </recommendedName>
</protein>
<accession>B7NHU3</accession>
<keyword id="KW-0479">Metal-binding</keyword>
<keyword id="KW-0520">NAD</keyword>
<keyword id="KW-0560">Oxidoreductase</keyword>
<gene>
    <name evidence="1" type="primary">maeA</name>
    <name type="ordered locus">ECIAI39_1743</name>
</gene>
<proteinExistence type="inferred from homology"/>
<sequence length="565" mass="63172">MEPKTKKQRSLYIPYAGPVLLEFPLLNKGSAFSMEERRNFNLLGLLPEVVETIEEQAERAWIQYQGFKTEIDKHIYLRNIQDTNETLFYRLVNNHLDEMMPVIYTPTVGAACERFSEIYRRSRGVFISYQNRHNMDDILQNVPNHNIKVIVVTDGERILGLGDQGIGGMGIPIGKLSLYTACGGISPAYTLPVVLDVGTNNQQLLNDPLYMGWRNPRITDDEYYEFVDEFIQAVKQRWPDVLLQFEDFAQKNAMPLLNRYRNEICSFNDDIQGTAAVTVGTLIAASRAAGGQLSEKKIVFLGAGSAGCGIAEMIIAQTQREGLSEEAARQKVFMVDRFGLLTDKMPNLLPFQTKLVQKRENLSDWDTDSDVLSLLDVVRNVKPDILIGVSGQTGLFTEEIIREMHKHCPRPIVMPLSNPTSRVEATPQDIIAWTEGNALVATGSPFNPVVWKDKIYPIAQCNNAFIFPGIGLGVIASGASRITDEMLMSASETLAQYSPLVLNGEGLVLPELKDIQKVSRAIAFAVGKMAQQQGVAVKTSAEALQQAIDDNFWHAEYRDYRRTSI</sequence>
<name>MAO1_ECO7I</name>
<organism>
    <name type="scientific">Escherichia coli O7:K1 (strain IAI39 / ExPEC)</name>
    <dbReference type="NCBI Taxonomy" id="585057"/>
    <lineage>
        <taxon>Bacteria</taxon>
        <taxon>Pseudomonadati</taxon>
        <taxon>Pseudomonadota</taxon>
        <taxon>Gammaproteobacteria</taxon>
        <taxon>Enterobacterales</taxon>
        <taxon>Enterobacteriaceae</taxon>
        <taxon>Escherichia</taxon>
    </lineage>
</organism>
<reference key="1">
    <citation type="journal article" date="2009" name="PLoS Genet.">
        <title>Organised genome dynamics in the Escherichia coli species results in highly diverse adaptive paths.</title>
        <authorList>
            <person name="Touchon M."/>
            <person name="Hoede C."/>
            <person name="Tenaillon O."/>
            <person name="Barbe V."/>
            <person name="Baeriswyl S."/>
            <person name="Bidet P."/>
            <person name="Bingen E."/>
            <person name="Bonacorsi S."/>
            <person name="Bouchier C."/>
            <person name="Bouvet O."/>
            <person name="Calteau A."/>
            <person name="Chiapello H."/>
            <person name="Clermont O."/>
            <person name="Cruveiller S."/>
            <person name="Danchin A."/>
            <person name="Diard M."/>
            <person name="Dossat C."/>
            <person name="Karoui M.E."/>
            <person name="Frapy E."/>
            <person name="Garry L."/>
            <person name="Ghigo J.M."/>
            <person name="Gilles A.M."/>
            <person name="Johnson J."/>
            <person name="Le Bouguenec C."/>
            <person name="Lescat M."/>
            <person name="Mangenot S."/>
            <person name="Martinez-Jehanne V."/>
            <person name="Matic I."/>
            <person name="Nassif X."/>
            <person name="Oztas S."/>
            <person name="Petit M.A."/>
            <person name="Pichon C."/>
            <person name="Rouy Z."/>
            <person name="Ruf C.S."/>
            <person name="Schneider D."/>
            <person name="Tourret J."/>
            <person name="Vacherie B."/>
            <person name="Vallenet D."/>
            <person name="Medigue C."/>
            <person name="Rocha E.P.C."/>
            <person name="Denamur E."/>
        </authorList>
    </citation>
    <scope>NUCLEOTIDE SEQUENCE [LARGE SCALE GENOMIC DNA]</scope>
    <source>
        <strain>IAI39 / ExPEC</strain>
    </source>
</reference>
<feature type="chain" id="PRO_1000185992" description="NAD-dependent malic enzyme">
    <location>
        <begin position="1"/>
        <end position="565"/>
    </location>
</feature>
<feature type="active site" description="Proton donor" evidence="1">
    <location>
        <position position="104"/>
    </location>
</feature>
<feature type="active site" description="Proton acceptor" evidence="1">
    <location>
        <position position="175"/>
    </location>
</feature>
<feature type="binding site" evidence="1">
    <location>
        <position position="157"/>
    </location>
    <ligand>
        <name>NAD(+)</name>
        <dbReference type="ChEBI" id="CHEBI:57540"/>
    </ligand>
</feature>
<feature type="binding site" evidence="1">
    <location>
        <position position="246"/>
    </location>
    <ligand>
        <name>a divalent metal cation</name>
        <dbReference type="ChEBI" id="CHEBI:60240"/>
    </ligand>
</feature>
<feature type="binding site" evidence="1">
    <location>
        <position position="247"/>
    </location>
    <ligand>
        <name>a divalent metal cation</name>
        <dbReference type="ChEBI" id="CHEBI:60240"/>
    </ligand>
</feature>
<feature type="binding site" evidence="1">
    <location>
        <position position="270"/>
    </location>
    <ligand>
        <name>a divalent metal cation</name>
        <dbReference type="ChEBI" id="CHEBI:60240"/>
    </ligand>
</feature>
<feature type="binding site" evidence="1">
    <location>
        <position position="270"/>
    </location>
    <ligand>
        <name>NAD(+)</name>
        <dbReference type="ChEBI" id="CHEBI:57540"/>
    </ligand>
</feature>
<feature type="binding site" evidence="1">
    <location>
        <position position="418"/>
    </location>
    <ligand>
        <name>NAD(+)</name>
        <dbReference type="ChEBI" id="CHEBI:57540"/>
    </ligand>
</feature>
<feature type="site" description="Important for activity" evidence="1">
    <location>
        <position position="270"/>
    </location>
</feature>